<comment type="function">
    <text evidence="1">ATP-dependent RNA helicase involved in mRNA turnover, and more specifically in mRNA decapping. Is involved in G1/S DNA-damage checkpoint recovery, probably through the regulation of the translational status of a subset of mRNAs. May also have a role in translation and mRNA nuclear export (By similarity).</text>
</comment>
<comment type="catalytic activity">
    <reaction>
        <text>ATP + H2O = ADP + phosphate + H(+)</text>
        <dbReference type="Rhea" id="RHEA:13065"/>
        <dbReference type="ChEBI" id="CHEBI:15377"/>
        <dbReference type="ChEBI" id="CHEBI:15378"/>
        <dbReference type="ChEBI" id="CHEBI:30616"/>
        <dbReference type="ChEBI" id="CHEBI:43474"/>
        <dbReference type="ChEBI" id="CHEBI:456216"/>
        <dbReference type="EC" id="3.6.4.13"/>
    </reaction>
</comment>
<comment type="subcellular location">
    <subcellularLocation>
        <location evidence="1">Cytoplasm</location>
        <location evidence="1">P-body</location>
    </subcellularLocation>
    <text evidence="1">Is concentrated in several cytoplasmic foci called P bodies (or cytoplasmic processing bodies) which represent sites of mRNA decapping and 5' to 3' exonucleotidic decay.</text>
</comment>
<comment type="domain">
    <text>The Q motif is unique to and characteristic of the DEAD box family of RNA helicases and controls ATP binding and hydrolysis.</text>
</comment>
<comment type="similarity">
    <text evidence="4">Belongs to the DEAD box helicase family. DDX6/DHH1 subfamily.</text>
</comment>
<feature type="chain" id="PRO_0000255996" description="ATP-dependent RNA helicase DHH1">
    <location>
        <begin position="1"/>
        <end position="512"/>
    </location>
</feature>
<feature type="domain" description="Helicase ATP-binding" evidence="2">
    <location>
        <begin position="42"/>
        <end position="212"/>
    </location>
</feature>
<feature type="domain" description="Helicase C-terminal" evidence="3">
    <location>
        <begin position="222"/>
        <end position="382"/>
    </location>
</feature>
<feature type="short sequence motif" description="Q motif">
    <location>
        <begin position="11"/>
        <end position="39"/>
    </location>
</feature>
<feature type="short sequence motif" description="DEAD box">
    <location>
        <begin position="160"/>
        <end position="163"/>
    </location>
</feature>
<feature type="binding site" evidence="2">
    <location>
        <begin position="55"/>
        <end position="62"/>
    </location>
    <ligand>
        <name>ATP</name>
        <dbReference type="ChEBI" id="CHEBI:30616"/>
    </ligand>
</feature>
<name>DHH1_CHAGB</name>
<proteinExistence type="inferred from homology"/>
<keyword id="KW-0067">ATP-binding</keyword>
<keyword id="KW-0963">Cytoplasm</keyword>
<keyword id="KW-0347">Helicase</keyword>
<keyword id="KW-0378">Hydrolase</keyword>
<keyword id="KW-0507">mRNA processing</keyword>
<keyword id="KW-0509">mRNA transport</keyword>
<keyword id="KW-0547">Nucleotide-binding</keyword>
<keyword id="KW-1185">Reference proteome</keyword>
<keyword id="KW-0694">RNA-binding</keyword>
<keyword id="KW-0810">Translation regulation</keyword>
<keyword id="KW-0813">Transport</keyword>
<evidence type="ECO:0000250" key="1"/>
<evidence type="ECO:0000255" key="2">
    <source>
        <dbReference type="PROSITE-ProRule" id="PRU00541"/>
    </source>
</evidence>
<evidence type="ECO:0000255" key="3">
    <source>
        <dbReference type="PROSITE-ProRule" id="PRU00542"/>
    </source>
</evidence>
<evidence type="ECO:0000305" key="4"/>
<protein>
    <recommendedName>
        <fullName>ATP-dependent RNA helicase DHH1</fullName>
        <ecNumber>3.6.4.13</ecNumber>
    </recommendedName>
</protein>
<dbReference type="EC" id="3.6.4.13"/>
<dbReference type="EMBL" id="CH408035">
    <property type="protein sequence ID" value="EAQ83457.1"/>
    <property type="molecule type" value="Genomic_DNA"/>
</dbReference>
<dbReference type="RefSeq" id="XP_001227788.1">
    <property type="nucleotide sequence ID" value="XM_001227787.1"/>
</dbReference>
<dbReference type="SMR" id="Q2GQ93"/>
<dbReference type="FunCoup" id="Q2GQ93">
    <property type="interactions" value="1180"/>
</dbReference>
<dbReference type="STRING" id="306901.Q2GQ93"/>
<dbReference type="GeneID" id="4396346"/>
<dbReference type="VEuPathDB" id="FungiDB:CHGG_09861"/>
<dbReference type="eggNOG" id="KOG0326">
    <property type="taxonomic scope" value="Eukaryota"/>
</dbReference>
<dbReference type="HOGENOM" id="CLU_003041_30_2_1"/>
<dbReference type="InParanoid" id="Q2GQ93"/>
<dbReference type="OMA" id="TYEDRHT"/>
<dbReference type="OrthoDB" id="10265785at2759"/>
<dbReference type="Proteomes" id="UP000001056">
    <property type="component" value="Unassembled WGS sequence"/>
</dbReference>
<dbReference type="GO" id="GO:0000932">
    <property type="term" value="C:P-body"/>
    <property type="evidence" value="ECO:0007669"/>
    <property type="project" value="UniProtKB-SubCell"/>
</dbReference>
<dbReference type="GO" id="GO:0005524">
    <property type="term" value="F:ATP binding"/>
    <property type="evidence" value="ECO:0007669"/>
    <property type="project" value="UniProtKB-KW"/>
</dbReference>
<dbReference type="GO" id="GO:0016887">
    <property type="term" value="F:ATP hydrolysis activity"/>
    <property type="evidence" value="ECO:0007669"/>
    <property type="project" value="RHEA"/>
</dbReference>
<dbReference type="GO" id="GO:0003723">
    <property type="term" value="F:RNA binding"/>
    <property type="evidence" value="ECO:0007669"/>
    <property type="project" value="UniProtKB-KW"/>
</dbReference>
<dbReference type="GO" id="GO:0003724">
    <property type="term" value="F:RNA helicase activity"/>
    <property type="evidence" value="ECO:0007669"/>
    <property type="project" value="UniProtKB-EC"/>
</dbReference>
<dbReference type="GO" id="GO:0006397">
    <property type="term" value="P:mRNA processing"/>
    <property type="evidence" value="ECO:0007669"/>
    <property type="project" value="UniProtKB-KW"/>
</dbReference>
<dbReference type="GO" id="GO:0051028">
    <property type="term" value="P:mRNA transport"/>
    <property type="evidence" value="ECO:0007669"/>
    <property type="project" value="UniProtKB-KW"/>
</dbReference>
<dbReference type="GO" id="GO:0006417">
    <property type="term" value="P:regulation of translation"/>
    <property type="evidence" value="ECO:0007669"/>
    <property type="project" value="UniProtKB-KW"/>
</dbReference>
<dbReference type="CDD" id="cd17940">
    <property type="entry name" value="DEADc_DDX6"/>
    <property type="match status" value="1"/>
</dbReference>
<dbReference type="CDD" id="cd18787">
    <property type="entry name" value="SF2_C_DEAD"/>
    <property type="match status" value="1"/>
</dbReference>
<dbReference type="FunFam" id="3.40.50.300:FF:000114">
    <property type="entry name" value="ATP-dependent RNA helicase DDX6"/>
    <property type="match status" value="1"/>
</dbReference>
<dbReference type="Gene3D" id="3.40.50.300">
    <property type="entry name" value="P-loop containing nucleotide triphosphate hydrolases"/>
    <property type="match status" value="2"/>
</dbReference>
<dbReference type="InterPro" id="IPR011545">
    <property type="entry name" value="DEAD/DEAH_box_helicase_dom"/>
</dbReference>
<dbReference type="InterPro" id="IPR014001">
    <property type="entry name" value="Helicase_ATP-bd"/>
</dbReference>
<dbReference type="InterPro" id="IPR001650">
    <property type="entry name" value="Helicase_C-like"/>
</dbReference>
<dbReference type="InterPro" id="IPR027417">
    <property type="entry name" value="P-loop_NTPase"/>
</dbReference>
<dbReference type="InterPro" id="IPR000629">
    <property type="entry name" value="RNA-helicase_DEAD-box_CS"/>
</dbReference>
<dbReference type="InterPro" id="IPR014014">
    <property type="entry name" value="RNA_helicase_DEAD_Q_motif"/>
</dbReference>
<dbReference type="PANTHER" id="PTHR47960">
    <property type="entry name" value="DEAD-BOX ATP-DEPENDENT RNA HELICASE 50"/>
    <property type="match status" value="1"/>
</dbReference>
<dbReference type="Pfam" id="PF00270">
    <property type="entry name" value="DEAD"/>
    <property type="match status" value="1"/>
</dbReference>
<dbReference type="Pfam" id="PF00271">
    <property type="entry name" value="Helicase_C"/>
    <property type="match status" value="1"/>
</dbReference>
<dbReference type="SMART" id="SM00487">
    <property type="entry name" value="DEXDc"/>
    <property type="match status" value="1"/>
</dbReference>
<dbReference type="SMART" id="SM00490">
    <property type="entry name" value="HELICc"/>
    <property type="match status" value="1"/>
</dbReference>
<dbReference type="SUPFAM" id="SSF52540">
    <property type="entry name" value="P-loop containing nucleoside triphosphate hydrolases"/>
    <property type="match status" value="1"/>
</dbReference>
<dbReference type="PROSITE" id="PS00039">
    <property type="entry name" value="DEAD_ATP_HELICASE"/>
    <property type="match status" value="1"/>
</dbReference>
<dbReference type="PROSITE" id="PS51192">
    <property type="entry name" value="HELICASE_ATP_BIND_1"/>
    <property type="match status" value="1"/>
</dbReference>
<dbReference type="PROSITE" id="PS51194">
    <property type="entry name" value="HELICASE_CTER"/>
    <property type="match status" value="1"/>
</dbReference>
<dbReference type="PROSITE" id="PS51195">
    <property type="entry name" value="Q_MOTIF"/>
    <property type="match status" value="1"/>
</dbReference>
<organism>
    <name type="scientific">Chaetomium globosum (strain ATCC 6205 / CBS 148.51 / DSM 1962 / NBRC 6347 / NRRL 1970)</name>
    <name type="common">Soil fungus</name>
    <dbReference type="NCBI Taxonomy" id="306901"/>
    <lineage>
        <taxon>Eukaryota</taxon>
        <taxon>Fungi</taxon>
        <taxon>Dikarya</taxon>
        <taxon>Ascomycota</taxon>
        <taxon>Pezizomycotina</taxon>
        <taxon>Sordariomycetes</taxon>
        <taxon>Sordariomycetidae</taxon>
        <taxon>Sordariales</taxon>
        <taxon>Chaetomiaceae</taxon>
        <taxon>Chaetomium</taxon>
    </lineage>
</organism>
<accession>Q2GQ93</accession>
<reference key="1">
    <citation type="journal article" date="2015" name="Genome Announc.">
        <title>Draft genome sequence of the cellulolytic fungus Chaetomium globosum.</title>
        <authorList>
            <person name="Cuomo C.A."/>
            <person name="Untereiner W.A."/>
            <person name="Ma L.-J."/>
            <person name="Grabherr M."/>
            <person name="Birren B.W."/>
        </authorList>
    </citation>
    <scope>NUCLEOTIDE SEQUENCE [LARGE SCALE GENOMIC DNA]</scope>
    <source>
        <strain>ATCC 6205 / CBS 148.51 / DSM 1962 / NBRC 6347 / NRRL 1970</strain>
    </source>
</reference>
<sequence>MDRDVTNTKGLDFEDFGLKRDLLMGIFEAGFEKPSPIQEESIPVALVGRDILARAKNGTGKTAAFVIPALEKINPKVSKIQCLILVPTRELAMQTSQVCKTLGKHLGINVMVTTGGTGLRDDIVRLQDPVHIVVGTPGRILDLAGKQVADLSECPMFIMDEADKLLSIEFTPVIEQLLRFHPKDRQVMLFSATFPISVKDFSDKNMTSPYEINLMDELTLRGITQYYAYVEEKQKVHCLNTLFSKLQINQSIIFCNSTNRVELLAKKITELGYSCFYSHAKMAQQARNRVFHDFRNGVCRNLVCSDLLTRGIDIQAVNVVINFDFPKNAETYLHRIGRSGRYGHLGLAINLINWDDRFNLYNIERDLGTEIQPIPQTIDKSLYVYENPESIPRPISNLKPAGIQQQQQLSIPSTAVGRLAGTGPPKRFWSVWPSRPRRVPRQSRPLWWPPWRTFPRLPARAGWAPELRRPARWPCAGPKPADIPCSAGLGLSLSHLFGALGGVLTIAISSPP</sequence>
<gene>
    <name type="primary">DHH1</name>
    <name type="ORF">CHGG_09861</name>
</gene>